<dbReference type="EC" id="1.17.1.8" evidence="1"/>
<dbReference type="EMBL" id="CP001158">
    <property type="protein sequence ID" value="ACL29966.1"/>
    <property type="molecule type" value="Genomic_DNA"/>
</dbReference>
<dbReference type="RefSeq" id="WP_012619450.1">
    <property type="nucleotide sequence ID" value="NC_011834.1"/>
</dbReference>
<dbReference type="SMR" id="B8D751"/>
<dbReference type="KEGG" id="bau:BUAPTUC7_145"/>
<dbReference type="HOGENOM" id="CLU_047479_2_1_6"/>
<dbReference type="UniPathway" id="UPA00034">
    <property type="reaction ID" value="UER00018"/>
</dbReference>
<dbReference type="GO" id="GO:0005829">
    <property type="term" value="C:cytosol"/>
    <property type="evidence" value="ECO:0007669"/>
    <property type="project" value="TreeGrafter"/>
</dbReference>
<dbReference type="GO" id="GO:0008839">
    <property type="term" value="F:4-hydroxy-tetrahydrodipicolinate reductase"/>
    <property type="evidence" value="ECO:0007669"/>
    <property type="project" value="UniProtKB-EC"/>
</dbReference>
<dbReference type="GO" id="GO:0051287">
    <property type="term" value="F:NAD binding"/>
    <property type="evidence" value="ECO:0007669"/>
    <property type="project" value="UniProtKB-UniRule"/>
</dbReference>
<dbReference type="GO" id="GO:0050661">
    <property type="term" value="F:NADP binding"/>
    <property type="evidence" value="ECO:0007669"/>
    <property type="project" value="UniProtKB-UniRule"/>
</dbReference>
<dbReference type="GO" id="GO:0016726">
    <property type="term" value="F:oxidoreductase activity, acting on CH or CH2 groups, NAD or NADP as acceptor"/>
    <property type="evidence" value="ECO:0007669"/>
    <property type="project" value="UniProtKB-UniRule"/>
</dbReference>
<dbReference type="GO" id="GO:0019877">
    <property type="term" value="P:diaminopimelate biosynthetic process"/>
    <property type="evidence" value="ECO:0007669"/>
    <property type="project" value="UniProtKB-UniRule"/>
</dbReference>
<dbReference type="GO" id="GO:0009089">
    <property type="term" value="P:lysine biosynthetic process via diaminopimelate"/>
    <property type="evidence" value="ECO:0007669"/>
    <property type="project" value="UniProtKB-UniRule"/>
</dbReference>
<dbReference type="CDD" id="cd02274">
    <property type="entry name" value="DHDPR_N"/>
    <property type="match status" value="1"/>
</dbReference>
<dbReference type="FunFam" id="3.30.360.10:FF:000004">
    <property type="entry name" value="4-hydroxy-tetrahydrodipicolinate reductase"/>
    <property type="match status" value="1"/>
</dbReference>
<dbReference type="Gene3D" id="3.30.360.10">
    <property type="entry name" value="Dihydrodipicolinate Reductase, domain 2"/>
    <property type="match status" value="1"/>
</dbReference>
<dbReference type="Gene3D" id="3.40.50.720">
    <property type="entry name" value="NAD(P)-binding Rossmann-like Domain"/>
    <property type="match status" value="1"/>
</dbReference>
<dbReference type="HAMAP" id="MF_00102">
    <property type="entry name" value="DapB"/>
    <property type="match status" value="1"/>
</dbReference>
<dbReference type="InterPro" id="IPR022663">
    <property type="entry name" value="DapB_C"/>
</dbReference>
<dbReference type="InterPro" id="IPR000846">
    <property type="entry name" value="DapB_N"/>
</dbReference>
<dbReference type="InterPro" id="IPR022664">
    <property type="entry name" value="DapB_N_CS"/>
</dbReference>
<dbReference type="InterPro" id="IPR023940">
    <property type="entry name" value="DHDPR_bac"/>
</dbReference>
<dbReference type="InterPro" id="IPR036291">
    <property type="entry name" value="NAD(P)-bd_dom_sf"/>
</dbReference>
<dbReference type="NCBIfam" id="TIGR00036">
    <property type="entry name" value="dapB"/>
    <property type="match status" value="1"/>
</dbReference>
<dbReference type="PANTHER" id="PTHR20836:SF0">
    <property type="entry name" value="4-HYDROXY-TETRAHYDRODIPICOLINATE REDUCTASE 1, CHLOROPLASTIC-RELATED"/>
    <property type="match status" value="1"/>
</dbReference>
<dbReference type="PANTHER" id="PTHR20836">
    <property type="entry name" value="DIHYDRODIPICOLINATE REDUCTASE"/>
    <property type="match status" value="1"/>
</dbReference>
<dbReference type="Pfam" id="PF05173">
    <property type="entry name" value="DapB_C"/>
    <property type="match status" value="1"/>
</dbReference>
<dbReference type="Pfam" id="PF01113">
    <property type="entry name" value="DapB_N"/>
    <property type="match status" value="1"/>
</dbReference>
<dbReference type="PIRSF" id="PIRSF000161">
    <property type="entry name" value="DHPR"/>
    <property type="match status" value="1"/>
</dbReference>
<dbReference type="SUPFAM" id="SSF55347">
    <property type="entry name" value="Glyceraldehyde-3-phosphate dehydrogenase-like, C-terminal domain"/>
    <property type="match status" value="1"/>
</dbReference>
<dbReference type="SUPFAM" id="SSF51735">
    <property type="entry name" value="NAD(P)-binding Rossmann-fold domains"/>
    <property type="match status" value="1"/>
</dbReference>
<dbReference type="PROSITE" id="PS01298">
    <property type="entry name" value="DAPB"/>
    <property type="match status" value="1"/>
</dbReference>
<keyword id="KW-0028">Amino-acid biosynthesis</keyword>
<keyword id="KW-0963">Cytoplasm</keyword>
<keyword id="KW-0220">Diaminopimelate biosynthesis</keyword>
<keyword id="KW-0457">Lysine biosynthesis</keyword>
<keyword id="KW-0520">NAD</keyword>
<keyword id="KW-0521">NADP</keyword>
<keyword id="KW-0560">Oxidoreductase</keyword>
<organism>
    <name type="scientific">Buchnera aphidicola subsp. Acyrthosiphon pisum (strain Tuc7)</name>
    <dbReference type="NCBI Taxonomy" id="561501"/>
    <lineage>
        <taxon>Bacteria</taxon>
        <taxon>Pseudomonadati</taxon>
        <taxon>Pseudomonadota</taxon>
        <taxon>Gammaproteobacteria</taxon>
        <taxon>Enterobacterales</taxon>
        <taxon>Erwiniaceae</taxon>
        <taxon>Buchnera</taxon>
    </lineage>
</organism>
<name>DAPB_BUCAT</name>
<feature type="chain" id="PRO_1000118847" description="4-hydroxy-tetrahydrodipicolinate reductase">
    <location>
        <begin position="1"/>
        <end position="269"/>
    </location>
</feature>
<feature type="active site" description="Proton donor/acceptor" evidence="1">
    <location>
        <position position="158"/>
    </location>
</feature>
<feature type="active site" description="Proton donor" evidence="1">
    <location>
        <position position="162"/>
    </location>
</feature>
<feature type="binding site" evidence="1">
    <location>
        <begin position="11"/>
        <end position="16"/>
    </location>
    <ligand>
        <name>NAD(+)</name>
        <dbReference type="ChEBI" id="CHEBI:57540"/>
    </ligand>
</feature>
<feature type="binding site" evidence="1">
    <location>
        <position position="39"/>
    </location>
    <ligand>
        <name>NADP(+)</name>
        <dbReference type="ChEBI" id="CHEBI:58349"/>
    </ligand>
</feature>
<feature type="binding site" evidence="1">
    <location>
        <begin position="101"/>
        <end position="103"/>
    </location>
    <ligand>
        <name>NAD(+)</name>
        <dbReference type="ChEBI" id="CHEBI:57540"/>
    </ligand>
</feature>
<feature type="binding site" evidence="1">
    <location>
        <begin position="125"/>
        <end position="128"/>
    </location>
    <ligand>
        <name>NAD(+)</name>
        <dbReference type="ChEBI" id="CHEBI:57540"/>
    </ligand>
</feature>
<feature type="binding site" evidence="1">
    <location>
        <position position="159"/>
    </location>
    <ligand>
        <name>(S)-2,3,4,5-tetrahydrodipicolinate</name>
        <dbReference type="ChEBI" id="CHEBI:16845"/>
    </ligand>
</feature>
<feature type="binding site" evidence="1">
    <location>
        <begin position="168"/>
        <end position="169"/>
    </location>
    <ligand>
        <name>(S)-2,3,4,5-tetrahydrodipicolinate</name>
        <dbReference type="ChEBI" id="CHEBI:16845"/>
    </ligand>
</feature>
<gene>
    <name evidence="1" type="primary">dapB</name>
    <name type="ordered locus">BUAPTUC7_145</name>
</gene>
<reference key="1">
    <citation type="journal article" date="2009" name="Science">
        <title>The dynamics and time scale of ongoing genomic erosion in symbiotic bacteria.</title>
        <authorList>
            <person name="Moran N.A."/>
            <person name="McLaughlin H.J."/>
            <person name="Sorek R."/>
        </authorList>
    </citation>
    <scope>NUCLEOTIDE SEQUENCE [LARGE SCALE GENOMIC DNA]</scope>
    <source>
        <strain>Tuc7</strain>
    </source>
</reference>
<sequence>MNKKTRIAITGPIGRMGRMLIKEIQNNKQSHLTVAVVQKKHQLIGQDIGRIIGIGEIGVLISDELNIKKNDFDVLIDFTRPAGTLEYLKYCNKFKKNIVIGTTGFSKEEIDIIKSYSQKIAIIIASNFSIGINLLFQLIKKTTQIIGKDSDINILEYHHRNKIDAPSGTALEIGEVISKVMNWNLNQDSIYYQKGITGIRDAKKIGFSIVRAGNIVGKHTVMFSSCDEEIKITHTASNRMSFARGAIQSALWIHKKNTGLFDMTDVLSL</sequence>
<proteinExistence type="inferred from homology"/>
<evidence type="ECO:0000255" key="1">
    <source>
        <dbReference type="HAMAP-Rule" id="MF_00102"/>
    </source>
</evidence>
<evidence type="ECO:0000305" key="2"/>
<comment type="function">
    <text evidence="1">Catalyzes the conversion of 4-hydroxy-tetrahydrodipicolinate (HTPA) to tetrahydrodipicolinate.</text>
</comment>
<comment type="catalytic activity">
    <reaction evidence="1">
        <text>(S)-2,3,4,5-tetrahydrodipicolinate + NAD(+) + H2O = (2S,4S)-4-hydroxy-2,3,4,5-tetrahydrodipicolinate + NADH + H(+)</text>
        <dbReference type="Rhea" id="RHEA:35323"/>
        <dbReference type="ChEBI" id="CHEBI:15377"/>
        <dbReference type="ChEBI" id="CHEBI:15378"/>
        <dbReference type="ChEBI" id="CHEBI:16845"/>
        <dbReference type="ChEBI" id="CHEBI:57540"/>
        <dbReference type="ChEBI" id="CHEBI:57945"/>
        <dbReference type="ChEBI" id="CHEBI:67139"/>
        <dbReference type="EC" id="1.17.1.8"/>
    </reaction>
</comment>
<comment type="catalytic activity">
    <reaction evidence="1">
        <text>(S)-2,3,4,5-tetrahydrodipicolinate + NADP(+) + H2O = (2S,4S)-4-hydroxy-2,3,4,5-tetrahydrodipicolinate + NADPH + H(+)</text>
        <dbReference type="Rhea" id="RHEA:35331"/>
        <dbReference type="ChEBI" id="CHEBI:15377"/>
        <dbReference type="ChEBI" id="CHEBI:15378"/>
        <dbReference type="ChEBI" id="CHEBI:16845"/>
        <dbReference type="ChEBI" id="CHEBI:57783"/>
        <dbReference type="ChEBI" id="CHEBI:58349"/>
        <dbReference type="ChEBI" id="CHEBI:67139"/>
        <dbReference type="EC" id="1.17.1.8"/>
    </reaction>
</comment>
<comment type="pathway">
    <text evidence="1">Amino-acid biosynthesis; L-lysine biosynthesis via DAP pathway; (S)-tetrahydrodipicolinate from L-aspartate: step 4/4.</text>
</comment>
<comment type="subunit">
    <text evidence="1">Homotetramer.</text>
</comment>
<comment type="subcellular location">
    <subcellularLocation>
        <location evidence="1">Cytoplasm</location>
    </subcellularLocation>
</comment>
<comment type="similarity">
    <text evidence="1">Belongs to the DapB family.</text>
</comment>
<comment type="caution">
    <text evidence="2">Was originally thought to be a dihydrodipicolinate reductase (DHDPR), catalyzing the conversion of dihydrodipicolinate to tetrahydrodipicolinate. However, it was shown in E.coli that the substrate of the enzymatic reaction is not dihydrodipicolinate (DHDP) but in fact (2S,4S)-4-hydroxy-2,3,4,5-tetrahydrodipicolinic acid (HTPA), the product released by the DapA-catalyzed reaction.</text>
</comment>
<accession>B8D751</accession>
<protein>
    <recommendedName>
        <fullName evidence="1">4-hydroxy-tetrahydrodipicolinate reductase</fullName>
        <shortName evidence="1">HTPA reductase</shortName>
        <ecNumber evidence="1">1.17.1.8</ecNumber>
    </recommendedName>
</protein>